<name>APT_DROPS</name>
<keyword id="KW-0963">Cytoplasm</keyword>
<keyword id="KW-0328">Glycosyltransferase</keyword>
<keyword id="KW-0660">Purine salvage</keyword>
<keyword id="KW-1185">Reference proteome</keyword>
<keyword id="KW-0808">Transferase</keyword>
<evidence type="ECO:0000305" key="1"/>
<protein>
    <recommendedName>
        <fullName>Adenine phosphoribosyltransferase</fullName>
        <shortName>APRT</shortName>
        <ecNumber>2.4.2.7</ecNumber>
    </recommendedName>
</protein>
<comment type="function">
    <text>Catalyzes a salvage reaction resulting in the formation of AMP, that is energically less costly than de novo synthesis.</text>
</comment>
<comment type="catalytic activity">
    <reaction>
        <text>AMP + diphosphate = 5-phospho-alpha-D-ribose 1-diphosphate + adenine</text>
        <dbReference type="Rhea" id="RHEA:16609"/>
        <dbReference type="ChEBI" id="CHEBI:16708"/>
        <dbReference type="ChEBI" id="CHEBI:33019"/>
        <dbReference type="ChEBI" id="CHEBI:58017"/>
        <dbReference type="ChEBI" id="CHEBI:456215"/>
        <dbReference type="EC" id="2.4.2.7"/>
    </reaction>
</comment>
<comment type="pathway">
    <text>Purine metabolism; AMP biosynthesis via salvage pathway; AMP from adenine: step 1/1.</text>
</comment>
<comment type="subunit">
    <text>Homodimer.</text>
</comment>
<comment type="subcellular location">
    <subcellularLocation>
        <location>Cytoplasm</location>
    </subcellularLocation>
</comment>
<comment type="similarity">
    <text evidence="1">Belongs to the purine/pyrimidine phosphoribosyltransferase family.</text>
</comment>
<comment type="sequence caution" evidence="1">
    <conflict type="erroneous gene model prediction">
        <sequence resource="EMBL-CDS" id="EAL31079"/>
    </conflict>
</comment>
<gene>
    <name type="primary">Aprt</name>
    <name type="ORF">GA14884</name>
</gene>
<organism>
    <name type="scientific">Drosophila pseudoobscura pseudoobscura</name>
    <name type="common">Fruit fly</name>
    <dbReference type="NCBI Taxonomy" id="46245"/>
    <lineage>
        <taxon>Eukaryota</taxon>
        <taxon>Metazoa</taxon>
        <taxon>Ecdysozoa</taxon>
        <taxon>Arthropoda</taxon>
        <taxon>Hexapoda</taxon>
        <taxon>Insecta</taxon>
        <taxon>Pterygota</taxon>
        <taxon>Neoptera</taxon>
        <taxon>Endopterygota</taxon>
        <taxon>Diptera</taxon>
        <taxon>Brachycera</taxon>
        <taxon>Muscomorpha</taxon>
        <taxon>Ephydroidea</taxon>
        <taxon>Drosophilidae</taxon>
        <taxon>Drosophila</taxon>
        <taxon>Sophophora</taxon>
    </lineage>
</organism>
<dbReference type="EC" id="2.4.2.7"/>
<dbReference type="EMBL" id="L06281">
    <property type="protein sequence ID" value="AAA57203.1"/>
    <property type="molecule type" value="Genomic_DNA"/>
</dbReference>
<dbReference type="EMBL" id="CH379069">
    <property type="protein sequence ID" value="EAL31079.3"/>
    <property type="status" value="ALT_SEQ"/>
    <property type="molecule type" value="Genomic_DNA"/>
</dbReference>
<dbReference type="SMR" id="P54363"/>
<dbReference type="FunCoup" id="P54363">
    <property type="interactions" value="743"/>
</dbReference>
<dbReference type="STRING" id="46245.P54363"/>
<dbReference type="eggNOG" id="KOG1712">
    <property type="taxonomic scope" value="Eukaryota"/>
</dbReference>
<dbReference type="InParanoid" id="P54363"/>
<dbReference type="UniPathway" id="UPA00588">
    <property type="reaction ID" value="UER00646"/>
</dbReference>
<dbReference type="Proteomes" id="UP000001819">
    <property type="component" value="Unplaced"/>
</dbReference>
<dbReference type="GO" id="GO:0005737">
    <property type="term" value="C:cytoplasm"/>
    <property type="evidence" value="ECO:0007669"/>
    <property type="project" value="UniProtKB-SubCell"/>
</dbReference>
<dbReference type="GO" id="GO:0002055">
    <property type="term" value="F:adenine binding"/>
    <property type="evidence" value="ECO:0007669"/>
    <property type="project" value="TreeGrafter"/>
</dbReference>
<dbReference type="GO" id="GO:0003999">
    <property type="term" value="F:adenine phosphoribosyltransferase activity"/>
    <property type="evidence" value="ECO:0007669"/>
    <property type="project" value="UniProtKB-EC"/>
</dbReference>
<dbReference type="GO" id="GO:0016208">
    <property type="term" value="F:AMP binding"/>
    <property type="evidence" value="ECO:0007669"/>
    <property type="project" value="TreeGrafter"/>
</dbReference>
<dbReference type="GO" id="GO:0006168">
    <property type="term" value="P:adenine salvage"/>
    <property type="evidence" value="ECO:0007669"/>
    <property type="project" value="InterPro"/>
</dbReference>
<dbReference type="GO" id="GO:0044209">
    <property type="term" value="P:AMP salvage"/>
    <property type="evidence" value="ECO:0007669"/>
    <property type="project" value="UniProtKB-UniPathway"/>
</dbReference>
<dbReference type="GO" id="GO:0006166">
    <property type="term" value="P:purine ribonucleoside salvage"/>
    <property type="evidence" value="ECO:0007669"/>
    <property type="project" value="UniProtKB-KW"/>
</dbReference>
<dbReference type="CDD" id="cd06223">
    <property type="entry name" value="PRTases_typeI"/>
    <property type="match status" value="1"/>
</dbReference>
<dbReference type="FunFam" id="3.40.50.2020:FF:000021">
    <property type="entry name" value="Adenine phosphoribosyltransferase"/>
    <property type="match status" value="1"/>
</dbReference>
<dbReference type="Gene3D" id="3.40.50.2020">
    <property type="match status" value="1"/>
</dbReference>
<dbReference type="HAMAP" id="MF_00004">
    <property type="entry name" value="Aden_phosphoribosyltr"/>
    <property type="match status" value="1"/>
</dbReference>
<dbReference type="InterPro" id="IPR005764">
    <property type="entry name" value="Ade_phspho_trans"/>
</dbReference>
<dbReference type="InterPro" id="IPR000836">
    <property type="entry name" value="PRibTrfase_dom"/>
</dbReference>
<dbReference type="InterPro" id="IPR029057">
    <property type="entry name" value="PRTase-like"/>
</dbReference>
<dbReference type="InterPro" id="IPR050054">
    <property type="entry name" value="UPRTase/APRTase"/>
</dbReference>
<dbReference type="NCBIfam" id="NF002634">
    <property type="entry name" value="PRK02304.1-3"/>
    <property type="match status" value="1"/>
</dbReference>
<dbReference type="NCBIfam" id="NF002636">
    <property type="entry name" value="PRK02304.1-5"/>
    <property type="match status" value="1"/>
</dbReference>
<dbReference type="PANTHER" id="PTHR32315">
    <property type="entry name" value="ADENINE PHOSPHORIBOSYLTRANSFERASE"/>
    <property type="match status" value="1"/>
</dbReference>
<dbReference type="PANTHER" id="PTHR32315:SF3">
    <property type="entry name" value="ADENINE PHOSPHORIBOSYLTRANSFERASE"/>
    <property type="match status" value="1"/>
</dbReference>
<dbReference type="Pfam" id="PF00156">
    <property type="entry name" value="Pribosyltran"/>
    <property type="match status" value="1"/>
</dbReference>
<dbReference type="SUPFAM" id="SSF53271">
    <property type="entry name" value="PRTase-like"/>
    <property type="match status" value="1"/>
</dbReference>
<dbReference type="PROSITE" id="PS00103">
    <property type="entry name" value="PUR_PYR_PR_TRANSFER"/>
    <property type="match status" value="1"/>
</dbReference>
<feature type="chain" id="PRO_0000149513" description="Adenine phosphoribosyltransferase">
    <location>
        <begin position="1"/>
        <end position="181"/>
    </location>
</feature>
<proteinExistence type="inferred from homology"/>
<accession>P54363</accession>
<accession>Q2M057</accession>
<sequence length="181" mass="19952">MSQVSAEDKLDYVKSKIGEYPNFPKEGILFRDIFGALTDPKACVYLRDLLVQYIRQSQPEVEVIVGLDSRGFLFNLLLATELGVGYTPIRKKGKLAGEVVSVEYQLEYGSDTFELQRTAIQPGQKVVIVDDLLATGGSLLAASELVRKVGGVVLESLVVMELVGLDGRKKLDCKVHSLIKY</sequence>
<reference key="1">
    <citation type="journal article" date="1993" name="Mol. Gen. Genet.">
        <title>Adenine phosphoribosyltransferase genes in two Drosophila species: dosage compensation, a nuclear matrix attachment site, and a novel intron position.</title>
        <authorList>
            <person name="Johnson D.H."/>
        </authorList>
    </citation>
    <scope>NUCLEOTIDE SEQUENCE [GENOMIC DNA]</scope>
</reference>
<reference key="2">
    <citation type="journal article" date="2005" name="Genome Res.">
        <title>Comparative genome sequencing of Drosophila pseudoobscura: chromosomal, gene, and cis-element evolution.</title>
        <authorList>
            <person name="Richards S."/>
            <person name="Liu Y."/>
            <person name="Bettencourt B.R."/>
            <person name="Hradecky P."/>
            <person name="Letovsky S."/>
            <person name="Nielsen R."/>
            <person name="Thornton K."/>
            <person name="Hubisz M.J."/>
            <person name="Chen R."/>
            <person name="Meisel R.P."/>
            <person name="Couronne O."/>
            <person name="Hua S."/>
            <person name="Smith M.A."/>
            <person name="Zhang P."/>
            <person name="Liu J."/>
            <person name="Bussemaker H.J."/>
            <person name="van Batenburg M.F."/>
            <person name="Howells S.L."/>
            <person name="Scherer S.E."/>
            <person name="Sodergren E."/>
            <person name="Matthews B.B."/>
            <person name="Crosby M.A."/>
            <person name="Schroeder A.J."/>
            <person name="Ortiz-Barrientos D."/>
            <person name="Rives C.M."/>
            <person name="Metzker M.L."/>
            <person name="Muzny D.M."/>
            <person name="Scott G."/>
            <person name="Steffen D."/>
            <person name="Wheeler D.A."/>
            <person name="Worley K.C."/>
            <person name="Havlak P."/>
            <person name="Durbin K.J."/>
            <person name="Egan A."/>
            <person name="Gill R."/>
            <person name="Hume J."/>
            <person name="Morgan M.B."/>
            <person name="Miner G."/>
            <person name="Hamilton C."/>
            <person name="Huang Y."/>
            <person name="Waldron L."/>
            <person name="Verduzco D."/>
            <person name="Clerc-Blankenburg K.P."/>
            <person name="Dubchak I."/>
            <person name="Noor M.A.F."/>
            <person name="Anderson W."/>
            <person name="White K.P."/>
            <person name="Clark A.G."/>
            <person name="Schaeffer S.W."/>
            <person name="Gelbart W.M."/>
            <person name="Weinstock G.M."/>
            <person name="Gibbs R.A."/>
        </authorList>
    </citation>
    <scope>NUCLEOTIDE SEQUENCE [LARGE SCALE GENOMIC DNA]</scope>
    <source>
        <strain>MV2-25 / Tucson 14011-0121.94</strain>
    </source>
</reference>